<organism>
    <name type="scientific">Metamycoplasma arthritidis (strain 158L3-1)</name>
    <name type="common">Mycoplasma arthritidis</name>
    <dbReference type="NCBI Taxonomy" id="243272"/>
    <lineage>
        <taxon>Bacteria</taxon>
        <taxon>Bacillati</taxon>
        <taxon>Mycoplasmatota</taxon>
        <taxon>Mycoplasmoidales</taxon>
        <taxon>Metamycoplasmataceae</taxon>
        <taxon>Metamycoplasma</taxon>
    </lineage>
</organism>
<reference key="1">
    <citation type="journal article" date="2008" name="Infect. Immun.">
        <title>Genome of Mycoplasma arthritidis.</title>
        <authorList>
            <person name="Dybvig K."/>
            <person name="Zuhua C."/>
            <person name="Lao P."/>
            <person name="Jordan D.S."/>
            <person name="French C.T."/>
            <person name="Tu A.H."/>
            <person name="Loraine A.E."/>
        </authorList>
    </citation>
    <scope>NUCLEOTIDE SEQUENCE [LARGE SCALE GENOMIC DNA]</scope>
    <source>
        <strain>158L3-1</strain>
    </source>
</reference>
<dbReference type="EMBL" id="CP001047">
    <property type="protein sequence ID" value="ACF07294.1"/>
    <property type="molecule type" value="Genomic_DNA"/>
</dbReference>
<dbReference type="SMR" id="B3PMP2"/>
<dbReference type="STRING" id="243272.MARTH_orf438"/>
<dbReference type="KEGG" id="mat:MARTH_orf438"/>
<dbReference type="eggNOG" id="COG0091">
    <property type="taxonomic scope" value="Bacteria"/>
</dbReference>
<dbReference type="HOGENOM" id="CLU_1308988_0_0_14"/>
<dbReference type="Proteomes" id="UP000008812">
    <property type="component" value="Chromosome"/>
</dbReference>
<dbReference type="GO" id="GO:0022625">
    <property type="term" value="C:cytosolic large ribosomal subunit"/>
    <property type="evidence" value="ECO:0007669"/>
    <property type="project" value="TreeGrafter"/>
</dbReference>
<dbReference type="GO" id="GO:0019843">
    <property type="term" value="F:rRNA binding"/>
    <property type="evidence" value="ECO:0007669"/>
    <property type="project" value="UniProtKB-UniRule"/>
</dbReference>
<dbReference type="GO" id="GO:0003735">
    <property type="term" value="F:structural constituent of ribosome"/>
    <property type="evidence" value="ECO:0007669"/>
    <property type="project" value="InterPro"/>
</dbReference>
<dbReference type="GO" id="GO:0006412">
    <property type="term" value="P:translation"/>
    <property type="evidence" value="ECO:0007669"/>
    <property type="project" value="UniProtKB-UniRule"/>
</dbReference>
<dbReference type="CDD" id="cd00336">
    <property type="entry name" value="Ribosomal_L22"/>
    <property type="match status" value="1"/>
</dbReference>
<dbReference type="Gene3D" id="3.90.470.10">
    <property type="entry name" value="Ribosomal protein L22/L17"/>
    <property type="match status" value="1"/>
</dbReference>
<dbReference type="HAMAP" id="MF_01331_B">
    <property type="entry name" value="Ribosomal_uL22_B"/>
    <property type="match status" value="1"/>
</dbReference>
<dbReference type="InterPro" id="IPR001063">
    <property type="entry name" value="Ribosomal_uL22"/>
</dbReference>
<dbReference type="InterPro" id="IPR005727">
    <property type="entry name" value="Ribosomal_uL22_bac/chlpt-type"/>
</dbReference>
<dbReference type="InterPro" id="IPR047867">
    <property type="entry name" value="Ribosomal_uL22_bac/org-type"/>
</dbReference>
<dbReference type="InterPro" id="IPR036394">
    <property type="entry name" value="Ribosomal_uL22_sf"/>
</dbReference>
<dbReference type="NCBIfam" id="TIGR01044">
    <property type="entry name" value="rplV_bact"/>
    <property type="match status" value="1"/>
</dbReference>
<dbReference type="PANTHER" id="PTHR13501">
    <property type="entry name" value="CHLOROPLAST 50S RIBOSOMAL PROTEIN L22-RELATED"/>
    <property type="match status" value="1"/>
</dbReference>
<dbReference type="PANTHER" id="PTHR13501:SF8">
    <property type="entry name" value="LARGE RIBOSOMAL SUBUNIT PROTEIN UL22M"/>
    <property type="match status" value="1"/>
</dbReference>
<dbReference type="Pfam" id="PF00237">
    <property type="entry name" value="Ribosomal_L22"/>
    <property type="match status" value="1"/>
</dbReference>
<dbReference type="SUPFAM" id="SSF54843">
    <property type="entry name" value="Ribosomal protein L22"/>
    <property type="match status" value="1"/>
</dbReference>
<proteinExistence type="inferred from homology"/>
<gene>
    <name evidence="1" type="primary">rplV</name>
    <name type="ordered locus">MARTH_orf438</name>
</gene>
<keyword id="KW-1185">Reference proteome</keyword>
<keyword id="KW-0687">Ribonucleoprotein</keyword>
<keyword id="KW-0689">Ribosomal protein</keyword>
<keyword id="KW-0694">RNA-binding</keyword>
<keyword id="KW-0699">rRNA-binding</keyword>
<sequence>MVQDIFSKSAVASVKAQRISPRKARLVADLIRYKTATQALIILQTTNKKASGIILKLLNSAIANATNNNGLDATKLVVTEILVNDGPTLKRYQPHSRGRAYPILKRTSHFFIRVSEVSLPSVNEMTSKETVKEPAKKPSAKVEKPAEAKAPKQETSTKKPTTTTESKPKTSKAPAQKQAAKVAKPAAEDTKKPVKKSTTTTKSTKKEGSK</sequence>
<accession>B3PMP2</accession>
<feature type="chain" id="PRO_0000354496" description="Large ribosomal subunit protein uL22">
    <location>
        <begin position="1"/>
        <end position="210"/>
    </location>
</feature>
<feature type="region of interest" description="Disordered" evidence="2">
    <location>
        <begin position="123"/>
        <end position="210"/>
    </location>
</feature>
<feature type="compositionally biased region" description="Basic and acidic residues" evidence="2">
    <location>
        <begin position="126"/>
        <end position="157"/>
    </location>
</feature>
<feature type="compositionally biased region" description="Low complexity" evidence="2">
    <location>
        <begin position="158"/>
        <end position="185"/>
    </location>
</feature>
<comment type="function">
    <text evidence="1">This protein binds specifically to 23S rRNA; its binding is stimulated by other ribosomal proteins, e.g. L4, L17, and L20. It is important during the early stages of 50S assembly. It makes multiple contacts with different domains of the 23S rRNA in the assembled 50S subunit and ribosome (By similarity).</text>
</comment>
<comment type="function">
    <text evidence="1">The globular domain of the protein is located near the polypeptide exit tunnel on the outside of the subunit, while an extended beta-hairpin is found that lines the wall of the exit tunnel in the center of the 70S ribosome.</text>
</comment>
<comment type="subunit">
    <text evidence="1">Part of the 50S ribosomal subunit.</text>
</comment>
<comment type="similarity">
    <text evidence="1">Belongs to the universal ribosomal protein uL22 family.</text>
</comment>
<name>RL22_META1</name>
<evidence type="ECO:0000255" key="1">
    <source>
        <dbReference type="HAMAP-Rule" id="MF_01331"/>
    </source>
</evidence>
<evidence type="ECO:0000256" key="2">
    <source>
        <dbReference type="SAM" id="MobiDB-lite"/>
    </source>
</evidence>
<evidence type="ECO:0000305" key="3"/>
<protein>
    <recommendedName>
        <fullName evidence="1">Large ribosomal subunit protein uL22</fullName>
    </recommendedName>
    <alternativeName>
        <fullName evidence="3">50S ribosomal protein L22</fullName>
    </alternativeName>
</protein>